<reference key="1">
    <citation type="journal article" date="2003" name="Proc. Natl. Acad. Sci. U.S.A.">
        <title>The complete genome sequence of Chromobacterium violaceum reveals remarkable and exploitable bacterial adaptability.</title>
        <authorList>
            <person name="Vasconcelos A.T.R."/>
            <person name="de Almeida D.F."/>
            <person name="Hungria M."/>
            <person name="Guimaraes C.T."/>
            <person name="Antonio R.V."/>
            <person name="Almeida F.C."/>
            <person name="de Almeida L.G.P."/>
            <person name="de Almeida R."/>
            <person name="Alves-Gomes J.A."/>
            <person name="Andrade E.M."/>
            <person name="Araripe J."/>
            <person name="de Araujo M.F.F."/>
            <person name="Astolfi-Filho S."/>
            <person name="Azevedo V."/>
            <person name="Baptista A.J."/>
            <person name="Bataus L.A.M."/>
            <person name="Batista J.S."/>
            <person name="Belo A."/>
            <person name="van den Berg C."/>
            <person name="Bogo M."/>
            <person name="Bonatto S."/>
            <person name="Bordignon J."/>
            <person name="Brigido M.M."/>
            <person name="Brito C.A."/>
            <person name="Brocchi M."/>
            <person name="Burity H.A."/>
            <person name="Camargo A.A."/>
            <person name="Cardoso D.D.P."/>
            <person name="Carneiro N.P."/>
            <person name="Carraro D.M."/>
            <person name="Carvalho C.M.B."/>
            <person name="Cascardo J.C.M."/>
            <person name="Cavada B.S."/>
            <person name="Chueire L.M.O."/>
            <person name="Creczynski-Pasa T.B."/>
            <person name="Cunha-Junior N.C."/>
            <person name="Fagundes N."/>
            <person name="Falcao C.L."/>
            <person name="Fantinatti F."/>
            <person name="Farias I.P."/>
            <person name="Felipe M.S.S."/>
            <person name="Ferrari L.P."/>
            <person name="Ferro J.A."/>
            <person name="Ferro M.I.T."/>
            <person name="Franco G.R."/>
            <person name="Freitas N.S.A."/>
            <person name="Furlan L.R."/>
            <person name="Gazzinelli R.T."/>
            <person name="Gomes E.A."/>
            <person name="Goncalves P.R."/>
            <person name="Grangeiro T.B."/>
            <person name="Grattapaglia D."/>
            <person name="Grisard E.C."/>
            <person name="Hanna E.S."/>
            <person name="Jardim S.N."/>
            <person name="Laurino J."/>
            <person name="Leoi L.C.T."/>
            <person name="Lima L.F.A."/>
            <person name="Loureiro M.F."/>
            <person name="Lyra M.C.C.P."/>
            <person name="Madeira H.M.F."/>
            <person name="Manfio G.P."/>
            <person name="Maranhao A.Q."/>
            <person name="Martins W.S."/>
            <person name="di Mauro S.M.Z."/>
            <person name="de Medeiros S.R.B."/>
            <person name="Meissner R.V."/>
            <person name="Moreira M.A.M."/>
            <person name="Nascimento F.F."/>
            <person name="Nicolas M.F."/>
            <person name="Oliveira J.G."/>
            <person name="Oliveira S.C."/>
            <person name="Paixao R.F.C."/>
            <person name="Parente J.A."/>
            <person name="Pedrosa F.O."/>
            <person name="Pena S.D.J."/>
            <person name="Pereira J.O."/>
            <person name="Pereira M."/>
            <person name="Pinto L.S.R.C."/>
            <person name="Pinto L.S."/>
            <person name="Porto J.I.R."/>
            <person name="Potrich D.P."/>
            <person name="Ramalho-Neto C.E."/>
            <person name="Reis A.M.M."/>
            <person name="Rigo L.U."/>
            <person name="Rondinelli E."/>
            <person name="Santos E.B.P."/>
            <person name="Santos F.R."/>
            <person name="Schneider M.P.C."/>
            <person name="Seuanez H.N."/>
            <person name="Silva A.M.R."/>
            <person name="da Silva A.L.C."/>
            <person name="Silva D.W."/>
            <person name="Silva R."/>
            <person name="Simoes I.C."/>
            <person name="Simon D."/>
            <person name="Soares C.M.A."/>
            <person name="Soares R.B.A."/>
            <person name="Souza E.M."/>
            <person name="Souza K.R.L."/>
            <person name="Souza R.C."/>
            <person name="Steffens M.B.R."/>
            <person name="Steindel M."/>
            <person name="Teixeira S.R."/>
            <person name="Urmenyi T."/>
            <person name="Vettore A."/>
            <person name="Wassem R."/>
            <person name="Zaha A."/>
            <person name="Simpson A.J.G."/>
        </authorList>
    </citation>
    <scope>NUCLEOTIDE SEQUENCE [LARGE SCALE GENOMIC DNA]</scope>
    <source>
        <strain>ATCC 12472 / DSM 30191 / JCM 1249 / CCUG 213 / NBRC 12614 / NCIMB 9131 / NCTC 9757 / MK</strain>
    </source>
</reference>
<feature type="chain" id="PRO_0000129550" description="Large ribosomal subunit protein uL2">
    <location>
        <begin position="1"/>
        <end position="277"/>
    </location>
</feature>
<feature type="region of interest" description="Disordered" evidence="2">
    <location>
        <begin position="37"/>
        <end position="59"/>
    </location>
</feature>
<feature type="region of interest" description="Disordered" evidence="2">
    <location>
        <begin position="221"/>
        <end position="265"/>
    </location>
</feature>
<feature type="compositionally biased region" description="Basic residues" evidence="2">
    <location>
        <begin position="50"/>
        <end position="59"/>
    </location>
</feature>
<feature type="compositionally biased region" description="Basic and acidic residues" evidence="2">
    <location>
        <begin position="229"/>
        <end position="241"/>
    </location>
</feature>
<comment type="function">
    <text evidence="1">One of the primary rRNA binding proteins. Required for association of the 30S and 50S subunits to form the 70S ribosome, for tRNA binding and peptide bond formation. It has been suggested to have peptidyltransferase activity; this is somewhat controversial. Makes several contacts with the 16S rRNA in the 70S ribosome.</text>
</comment>
<comment type="subunit">
    <text evidence="1">Part of the 50S ribosomal subunit. Forms a bridge to the 30S subunit in the 70S ribosome.</text>
</comment>
<comment type="similarity">
    <text evidence="1">Belongs to the universal ribosomal protein uL2 family.</text>
</comment>
<organism>
    <name type="scientific">Chromobacterium violaceum (strain ATCC 12472 / DSM 30191 / JCM 1249 / CCUG 213 / NBRC 12614 / NCIMB 9131 / NCTC 9757 / MK)</name>
    <dbReference type="NCBI Taxonomy" id="243365"/>
    <lineage>
        <taxon>Bacteria</taxon>
        <taxon>Pseudomonadati</taxon>
        <taxon>Pseudomonadota</taxon>
        <taxon>Betaproteobacteria</taxon>
        <taxon>Neisseriales</taxon>
        <taxon>Chromobacteriaceae</taxon>
        <taxon>Chromobacterium</taxon>
    </lineage>
</organism>
<proteinExistence type="inferred from homology"/>
<sequence>MPIVKVKPTSAGRRAVVKVVNPDLHKGAPHAALVEKKNSTGGRNHNGHITTRHRGGGHKKHYRLIDFRRNKDGIPAKVERIEYDPNRTAHIALLCYADGERRYIIAPRGVKVGAVLLSGSEAPIKAGNALPIRNIPVGTTIHCVEMQPGKGAQMVRSAGASAMLLAREGVYAQLRLRSGEIRLVHVDCRATVGEVGNEEHSLRKLGKAGATRWRGIRPTVRGTAMNPIDHPHGGGEGRTGEGRVPVSPWGTPAKGFRTRRNKRTDNMIVRRRYSNKG</sequence>
<name>RL2_CHRVO</name>
<dbReference type="EMBL" id="AE016825">
    <property type="protein sequence ID" value="AAQ61843.1"/>
    <property type="molecule type" value="Genomic_DNA"/>
</dbReference>
<dbReference type="RefSeq" id="WP_011137730.1">
    <property type="nucleotide sequence ID" value="NC_005085.1"/>
</dbReference>
<dbReference type="SMR" id="Q7NQF5"/>
<dbReference type="STRING" id="243365.CV_4183"/>
<dbReference type="GeneID" id="66366345"/>
<dbReference type="KEGG" id="cvi:CV_4183"/>
<dbReference type="eggNOG" id="COG0090">
    <property type="taxonomic scope" value="Bacteria"/>
</dbReference>
<dbReference type="HOGENOM" id="CLU_036235_2_1_4"/>
<dbReference type="OrthoDB" id="9778722at2"/>
<dbReference type="Proteomes" id="UP000001424">
    <property type="component" value="Chromosome"/>
</dbReference>
<dbReference type="GO" id="GO:0015934">
    <property type="term" value="C:large ribosomal subunit"/>
    <property type="evidence" value="ECO:0007669"/>
    <property type="project" value="InterPro"/>
</dbReference>
<dbReference type="GO" id="GO:0019843">
    <property type="term" value="F:rRNA binding"/>
    <property type="evidence" value="ECO:0007669"/>
    <property type="project" value="UniProtKB-UniRule"/>
</dbReference>
<dbReference type="GO" id="GO:0003735">
    <property type="term" value="F:structural constituent of ribosome"/>
    <property type="evidence" value="ECO:0007669"/>
    <property type="project" value="InterPro"/>
</dbReference>
<dbReference type="GO" id="GO:0016740">
    <property type="term" value="F:transferase activity"/>
    <property type="evidence" value="ECO:0007669"/>
    <property type="project" value="InterPro"/>
</dbReference>
<dbReference type="GO" id="GO:0002181">
    <property type="term" value="P:cytoplasmic translation"/>
    <property type="evidence" value="ECO:0007669"/>
    <property type="project" value="TreeGrafter"/>
</dbReference>
<dbReference type="FunFam" id="2.30.30.30:FF:000001">
    <property type="entry name" value="50S ribosomal protein L2"/>
    <property type="match status" value="1"/>
</dbReference>
<dbReference type="FunFam" id="2.40.50.140:FF:000003">
    <property type="entry name" value="50S ribosomal protein L2"/>
    <property type="match status" value="1"/>
</dbReference>
<dbReference type="FunFam" id="4.10.950.10:FF:000001">
    <property type="entry name" value="50S ribosomal protein L2"/>
    <property type="match status" value="1"/>
</dbReference>
<dbReference type="Gene3D" id="2.30.30.30">
    <property type="match status" value="1"/>
</dbReference>
<dbReference type="Gene3D" id="2.40.50.140">
    <property type="entry name" value="Nucleic acid-binding proteins"/>
    <property type="match status" value="1"/>
</dbReference>
<dbReference type="Gene3D" id="4.10.950.10">
    <property type="entry name" value="Ribosomal protein L2, domain 3"/>
    <property type="match status" value="1"/>
</dbReference>
<dbReference type="HAMAP" id="MF_01320_B">
    <property type="entry name" value="Ribosomal_uL2_B"/>
    <property type="match status" value="1"/>
</dbReference>
<dbReference type="InterPro" id="IPR012340">
    <property type="entry name" value="NA-bd_OB-fold"/>
</dbReference>
<dbReference type="InterPro" id="IPR014722">
    <property type="entry name" value="Rib_uL2_dom2"/>
</dbReference>
<dbReference type="InterPro" id="IPR002171">
    <property type="entry name" value="Ribosomal_uL2"/>
</dbReference>
<dbReference type="InterPro" id="IPR005880">
    <property type="entry name" value="Ribosomal_uL2_bac/org-type"/>
</dbReference>
<dbReference type="InterPro" id="IPR022669">
    <property type="entry name" value="Ribosomal_uL2_C"/>
</dbReference>
<dbReference type="InterPro" id="IPR022671">
    <property type="entry name" value="Ribosomal_uL2_CS"/>
</dbReference>
<dbReference type="InterPro" id="IPR014726">
    <property type="entry name" value="Ribosomal_uL2_dom3"/>
</dbReference>
<dbReference type="InterPro" id="IPR022666">
    <property type="entry name" value="Ribosomal_uL2_RNA-bd_dom"/>
</dbReference>
<dbReference type="InterPro" id="IPR008991">
    <property type="entry name" value="Translation_prot_SH3-like_sf"/>
</dbReference>
<dbReference type="NCBIfam" id="TIGR01171">
    <property type="entry name" value="rplB_bact"/>
    <property type="match status" value="1"/>
</dbReference>
<dbReference type="PANTHER" id="PTHR13691:SF5">
    <property type="entry name" value="LARGE RIBOSOMAL SUBUNIT PROTEIN UL2M"/>
    <property type="match status" value="1"/>
</dbReference>
<dbReference type="PANTHER" id="PTHR13691">
    <property type="entry name" value="RIBOSOMAL PROTEIN L2"/>
    <property type="match status" value="1"/>
</dbReference>
<dbReference type="Pfam" id="PF00181">
    <property type="entry name" value="Ribosomal_L2"/>
    <property type="match status" value="1"/>
</dbReference>
<dbReference type="Pfam" id="PF03947">
    <property type="entry name" value="Ribosomal_L2_C"/>
    <property type="match status" value="1"/>
</dbReference>
<dbReference type="PIRSF" id="PIRSF002158">
    <property type="entry name" value="Ribosomal_L2"/>
    <property type="match status" value="1"/>
</dbReference>
<dbReference type="SMART" id="SM01383">
    <property type="entry name" value="Ribosomal_L2"/>
    <property type="match status" value="1"/>
</dbReference>
<dbReference type="SMART" id="SM01382">
    <property type="entry name" value="Ribosomal_L2_C"/>
    <property type="match status" value="1"/>
</dbReference>
<dbReference type="SUPFAM" id="SSF50249">
    <property type="entry name" value="Nucleic acid-binding proteins"/>
    <property type="match status" value="1"/>
</dbReference>
<dbReference type="SUPFAM" id="SSF50104">
    <property type="entry name" value="Translation proteins SH3-like domain"/>
    <property type="match status" value="1"/>
</dbReference>
<dbReference type="PROSITE" id="PS00467">
    <property type="entry name" value="RIBOSOMAL_L2"/>
    <property type="match status" value="1"/>
</dbReference>
<accession>Q7NQF5</accession>
<evidence type="ECO:0000255" key="1">
    <source>
        <dbReference type="HAMAP-Rule" id="MF_01320"/>
    </source>
</evidence>
<evidence type="ECO:0000256" key="2">
    <source>
        <dbReference type="SAM" id="MobiDB-lite"/>
    </source>
</evidence>
<evidence type="ECO:0000305" key="3"/>
<protein>
    <recommendedName>
        <fullName evidence="1">Large ribosomal subunit protein uL2</fullName>
    </recommendedName>
    <alternativeName>
        <fullName evidence="3">50S ribosomal protein L2</fullName>
    </alternativeName>
</protein>
<gene>
    <name evidence="1" type="primary">rplB</name>
    <name type="ordered locus">CV_4183</name>
</gene>
<keyword id="KW-1185">Reference proteome</keyword>
<keyword id="KW-0687">Ribonucleoprotein</keyword>
<keyword id="KW-0689">Ribosomal protein</keyword>
<keyword id="KW-0694">RNA-binding</keyword>
<keyword id="KW-0699">rRNA-binding</keyword>